<gene>
    <name evidence="1" type="primary">greA</name>
    <name type="ordered locus">Teth39_0317</name>
</gene>
<organism>
    <name type="scientific">Thermoanaerobacter pseudethanolicus (strain ATCC 33223 / 39E)</name>
    <name type="common">Clostridium thermohydrosulfuricum</name>
    <dbReference type="NCBI Taxonomy" id="340099"/>
    <lineage>
        <taxon>Bacteria</taxon>
        <taxon>Bacillati</taxon>
        <taxon>Bacillota</taxon>
        <taxon>Clostridia</taxon>
        <taxon>Thermoanaerobacterales</taxon>
        <taxon>Thermoanaerobacteraceae</taxon>
        <taxon>Thermoanaerobacter</taxon>
    </lineage>
</organism>
<reference key="1">
    <citation type="submission" date="2008-01" db="EMBL/GenBank/DDBJ databases">
        <title>Complete sequence of Thermoanaerobacter pseudethanolicus 39E.</title>
        <authorList>
            <person name="Copeland A."/>
            <person name="Lucas S."/>
            <person name="Lapidus A."/>
            <person name="Barry K."/>
            <person name="Glavina del Rio T."/>
            <person name="Dalin E."/>
            <person name="Tice H."/>
            <person name="Pitluck S."/>
            <person name="Bruce D."/>
            <person name="Goodwin L."/>
            <person name="Saunders E."/>
            <person name="Brettin T."/>
            <person name="Detter J.C."/>
            <person name="Han C."/>
            <person name="Schmutz J."/>
            <person name="Larimer F."/>
            <person name="Land M."/>
            <person name="Hauser L."/>
            <person name="Kyrpides N."/>
            <person name="Lykidis A."/>
            <person name="Hemme C."/>
            <person name="Fields M.W."/>
            <person name="He Z."/>
            <person name="Zhou J."/>
            <person name="Richardson P."/>
        </authorList>
    </citation>
    <scope>NUCLEOTIDE SEQUENCE [LARGE SCALE GENOMIC DNA]</scope>
    <source>
        <strain>ATCC 33223 / DSM 2355 / 39E</strain>
    </source>
</reference>
<feature type="chain" id="PRO_1000094202" description="Transcription elongation factor GreA">
    <location>
        <begin position="1"/>
        <end position="157"/>
    </location>
</feature>
<feature type="coiled-coil region" evidence="1">
    <location>
        <begin position="12"/>
        <end position="74"/>
    </location>
</feature>
<proteinExistence type="inferred from homology"/>
<keyword id="KW-0175">Coiled coil</keyword>
<keyword id="KW-0238">DNA-binding</keyword>
<keyword id="KW-1185">Reference proteome</keyword>
<keyword id="KW-0804">Transcription</keyword>
<keyword id="KW-0805">Transcription regulation</keyword>
<name>GREA_THEP3</name>
<evidence type="ECO:0000255" key="1">
    <source>
        <dbReference type="HAMAP-Rule" id="MF_00105"/>
    </source>
</evidence>
<dbReference type="EMBL" id="CP000924">
    <property type="protein sequence ID" value="ABY93986.1"/>
    <property type="molecule type" value="Genomic_DNA"/>
</dbReference>
<dbReference type="RefSeq" id="WP_003867815.1">
    <property type="nucleotide sequence ID" value="NC_010321.1"/>
</dbReference>
<dbReference type="SMR" id="B0KCE3"/>
<dbReference type="STRING" id="340099.Teth39_0317"/>
<dbReference type="KEGG" id="tpd:Teth39_0317"/>
<dbReference type="eggNOG" id="COG0782">
    <property type="taxonomic scope" value="Bacteria"/>
</dbReference>
<dbReference type="HOGENOM" id="CLU_101379_2_1_9"/>
<dbReference type="Proteomes" id="UP000002156">
    <property type="component" value="Chromosome"/>
</dbReference>
<dbReference type="GO" id="GO:0003677">
    <property type="term" value="F:DNA binding"/>
    <property type="evidence" value="ECO:0007669"/>
    <property type="project" value="UniProtKB-UniRule"/>
</dbReference>
<dbReference type="GO" id="GO:0070063">
    <property type="term" value="F:RNA polymerase binding"/>
    <property type="evidence" value="ECO:0007669"/>
    <property type="project" value="InterPro"/>
</dbReference>
<dbReference type="GO" id="GO:0006354">
    <property type="term" value="P:DNA-templated transcription elongation"/>
    <property type="evidence" value="ECO:0007669"/>
    <property type="project" value="TreeGrafter"/>
</dbReference>
<dbReference type="GO" id="GO:0032784">
    <property type="term" value="P:regulation of DNA-templated transcription elongation"/>
    <property type="evidence" value="ECO:0007669"/>
    <property type="project" value="UniProtKB-UniRule"/>
</dbReference>
<dbReference type="FunFam" id="1.10.287.180:FF:000001">
    <property type="entry name" value="Transcription elongation factor GreA"/>
    <property type="match status" value="1"/>
</dbReference>
<dbReference type="FunFam" id="3.10.50.30:FF:000001">
    <property type="entry name" value="Transcription elongation factor GreA"/>
    <property type="match status" value="1"/>
</dbReference>
<dbReference type="Gene3D" id="3.10.50.30">
    <property type="entry name" value="Transcription elongation factor, GreA/GreB, C-terminal domain"/>
    <property type="match status" value="1"/>
</dbReference>
<dbReference type="Gene3D" id="1.10.287.180">
    <property type="entry name" value="Transcription elongation factor, GreA/GreB, N-terminal domain"/>
    <property type="match status" value="1"/>
</dbReference>
<dbReference type="HAMAP" id="MF_00105">
    <property type="entry name" value="GreA_GreB"/>
    <property type="match status" value="1"/>
</dbReference>
<dbReference type="InterPro" id="IPR036953">
    <property type="entry name" value="GreA/GreB_C_sf"/>
</dbReference>
<dbReference type="InterPro" id="IPR018151">
    <property type="entry name" value="TF_GreA/GreB_CS"/>
</dbReference>
<dbReference type="InterPro" id="IPR006359">
    <property type="entry name" value="Tscrpt_elong_fac_GreA"/>
</dbReference>
<dbReference type="InterPro" id="IPR028624">
    <property type="entry name" value="Tscrpt_elong_fac_GreA/B"/>
</dbReference>
<dbReference type="InterPro" id="IPR001437">
    <property type="entry name" value="Tscrpt_elong_fac_GreA/B_C"/>
</dbReference>
<dbReference type="InterPro" id="IPR023459">
    <property type="entry name" value="Tscrpt_elong_fac_GreA/B_fam"/>
</dbReference>
<dbReference type="InterPro" id="IPR022691">
    <property type="entry name" value="Tscrpt_elong_fac_GreA/B_N"/>
</dbReference>
<dbReference type="InterPro" id="IPR036805">
    <property type="entry name" value="Tscrpt_elong_fac_GreA/B_N_sf"/>
</dbReference>
<dbReference type="NCBIfam" id="TIGR01462">
    <property type="entry name" value="greA"/>
    <property type="match status" value="1"/>
</dbReference>
<dbReference type="NCBIfam" id="NF001261">
    <property type="entry name" value="PRK00226.1-2"/>
    <property type="match status" value="1"/>
</dbReference>
<dbReference type="NCBIfam" id="NF001263">
    <property type="entry name" value="PRK00226.1-4"/>
    <property type="match status" value="1"/>
</dbReference>
<dbReference type="PANTHER" id="PTHR30437">
    <property type="entry name" value="TRANSCRIPTION ELONGATION FACTOR GREA"/>
    <property type="match status" value="1"/>
</dbReference>
<dbReference type="PANTHER" id="PTHR30437:SF4">
    <property type="entry name" value="TRANSCRIPTION ELONGATION FACTOR GREA"/>
    <property type="match status" value="1"/>
</dbReference>
<dbReference type="Pfam" id="PF01272">
    <property type="entry name" value="GreA_GreB"/>
    <property type="match status" value="1"/>
</dbReference>
<dbReference type="Pfam" id="PF03449">
    <property type="entry name" value="GreA_GreB_N"/>
    <property type="match status" value="1"/>
</dbReference>
<dbReference type="PIRSF" id="PIRSF006092">
    <property type="entry name" value="GreA_GreB"/>
    <property type="match status" value="1"/>
</dbReference>
<dbReference type="SUPFAM" id="SSF54534">
    <property type="entry name" value="FKBP-like"/>
    <property type="match status" value="1"/>
</dbReference>
<dbReference type="SUPFAM" id="SSF46557">
    <property type="entry name" value="GreA transcript cleavage protein, N-terminal domain"/>
    <property type="match status" value="1"/>
</dbReference>
<dbReference type="PROSITE" id="PS00829">
    <property type="entry name" value="GREAB_1"/>
    <property type="match status" value="1"/>
</dbReference>
<dbReference type="PROSITE" id="PS00830">
    <property type="entry name" value="GREAB_2"/>
    <property type="match status" value="1"/>
</dbReference>
<sequence>MSKPVILTYEGLKKLEEELEYLKTVKRAEVAEKIKQARAFGDLSENSEYDEAKNEQAFIEGRIATLEAMLKNAKVIDEEDIKLDQVSIGCTVKVYDESYNEEVEYTIVGSAEADPMNNKISDESPIGKALLGKKVGDVVSVEVPAGIIKLKILEIRK</sequence>
<protein>
    <recommendedName>
        <fullName evidence="1">Transcription elongation factor GreA</fullName>
    </recommendedName>
    <alternativeName>
        <fullName evidence="1">Transcript cleavage factor GreA</fullName>
    </alternativeName>
</protein>
<comment type="function">
    <text evidence="1">Necessary for efficient RNA polymerase transcription elongation past template-encoded arresting sites. The arresting sites in DNA have the property of trapping a certain fraction of elongating RNA polymerases that pass through, resulting in locked ternary complexes. Cleavage of the nascent transcript by cleavage factors such as GreA or GreB allows the resumption of elongation from the new 3'terminus. GreA releases sequences of 2 to 3 nucleotides.</text>
</comment>
<comment type="similarity">
    <text evidence="1">Belongs to the GreA/GreB family.</text>
</comment>
<accession>B0KCE3</accession>